<reference key="1">
    <citation type="journal article" date="2007" name="Science">
        <title>The Fusarium graminearum genome reveals a link between localized polymorphism and pathogen specialization.</title>
        <authorList>
            <person name="Cuomo C.A."/>
            <person name="Gueldener U."/>
            <person name="Xu J.-R."/>
            <person name="Trail F."/>
            <person name="Turgeon B.G."/>
            <person name="Di Pietro A."/>
            <person name="Walton J.D."/>
            <person name="Ma L.-J."/>
            <person name="Baker S.E."/>
            <person name="Rep M."/>
            <person name="Adam G."/>
            <person name="Antoniw J."/>
            <person name="Baldwin T."/>
            <person name="Calvo S.E."/>
            <person name="Chang Y.-L."/>
            <person name="DeCaprio D."/>
            <person name="Gale L.R."/>
            <person name="Gnerre S."/>
            <person name="Goswami R.S."/>
            <person name="Hammond-Kosack K."/>
            <person name="Harris L.J."/>
            <person name="Hilburn K."/>
            <person name="Kennell J.C."/>
            <person name="Kroken S."/>
            <person name="Magnuson J.K."/>
            <person name="Mannhaupt G."/>
            <person name="Mauceli E.W."/>
            <person name="Mewes H.-W."/>
            <person name="Mitterbauer R."/>
            <person name="Muehlbauer G."/>
            <person name="Muensterkoetter M."/>
            <person name="Nelson D."/>
            <person name="O'Donnell K."/>
            <person name="Ouellet T."/>
            <person name="Qi W."/>
            <person name="Quesneville H."/>
            <person name="Roncero M.I.G."/>
            <person name="Seong K.-Y."/>
            <person name="Tetko I.V."/>
            <person name="Urban M."/>
            <person name="Waalwijk C."/>
            <person name="Ward T.J."/>
            <person name="Yao J."/>
            <person name="Birren B.W."/>
            <person name="Kistler H.C."/>
        </authorList>
    </citation>
    <scope>NUCLEOTIDE SEQUENCE [LARGE SCALE GENOMIC DNA]</scope>
    <source>
        <strain>ATCC MYA-4620 / CBS 123657 / FGSC 9075 / NRRL 31084 / PH-1</strain>
    </source>
</reference>
<reference key="2">
    <citation type="journal article" date="2010" name="Nature">
        <title>Comparative genomics reveals mobile pathogenicity chromosomes in Fusarium.</title>
        <authorList>
            <person name="Ma L.-J."/>
            <person name="van der Does H.C."/>
            <person name="Borkovich K.A."/>
            <person name="Coleman J.J."/>
            <person name="Daboussi M.-J."/>
            <person name="Di Pietro A."/>
            <person name="Dufresne M."/>
            <person name="Freitag M."/>
            <person name="Grabherr M."/>
            <person name="Henrissat B."/>
            <person name="Houterman P.M."/>
            <person name="Kang S."/>
            <person name="Shim W.-B."/>
            <person name="Woloshuk C."/>
            <person name="Xie X."/>
            <person name="Xu J.-R."/>
            <person name="Antoniw J."/>
            <person name="Baker S.E."/>
            <person name="Bluhm B.H."/>
            <person name="Breakspear A."/>
            <person name="Brown D.W."/>
            <person name="Butchko R.A.E."/>
            <person name="Chapman S."/>
            <person name="Coulson R."/>
            <person name="Coutinho P.M."/>
            <person name="Danchin E.G.J."/>
            <person name="Diener A."/>
            <person name="Gale L.R."/>
            <person name="Gardiner D.M."/>
            <person name="Goff S."/>
            <person name="Hammond-Kosack K.E."/>
            <person name="Hilburn K."/>
            <person name="Hua-Van A."/>
            <person name="Jonkers W."/>
            <person name="Kazan K."/>
            <person name="Kodira C.D."/>
            <person name="Koehrsen M."/>
            <person name="Kumar L."/>
            <person name="Lee Y.-H."/>
            <person name="Li L."/>
            <person name="Manners J.M."/>
            <person name="Miranda-Saavedra D."/>
            <person name="Mukherjee M."/>
            <person name="Park G."/>
            <person name="Park J."/>
            <person name="Park S.-Y."/>
            <person name="Proctor R.H."/>
            <person name="Regev A."/>
            <person name="Ruiz-Roldan M.C."/>
            <person name="Sain D."/>
            <person name="Sakthikumar S."/>
            <person name="Sykes S."/>
            <person name="Schwartz D.C."/>
            <person name="Turgeon B.G."/>
            <person name="Wapinski I."/>
            <person name="Yoder O."/>
            <person name="Young S."/>
            <person name="Zeng Q."/>
            <person name="Zhou S."/>
            <person name="Galagan J."/>
            <person name="Cuomo C.A."/>
            <person name="Kistler H.C."/>
            <person name="Rep M."/>
        </authorList>
    </citation>
    <scope>GENOME REANNOTATION</scope>
    <source>
        <strain>ATCC MYA-4620 / CBS 123657 / FGSC 9075 / NRRL 31084 / PH-1</strain>
    </source>
</reference>
<reference key="3">
    <citation type="journal article" date="2015" name="BMC Genomics">
        <title>The completed genome sequence of the pathogenic ascomycete fungus Fusarium graminearum.</title>
        <authorList>
            <person name="King R."/>
            <person name="Urban M."/>
            <person name="Hammond-Kosack M.C.U."/>
            <person name="Hassani-Pak K."/>
            <person name="Hammond-Kosack K.E."/>
        </authorList>
    </citation>
    <scope>NUCLEOTIDE SEQUENCE [LARGE SCALE GENOMIC DNA]</scope>
    <source>
        <strain>ATCC MYA-4620 / CBS 123657 / FGSC 9075 / NRRL 31084 / PH-1</strain>
    </source>
</reference>
<proteinExistence type="inferred from homology"/>
<gene>
    <name type="primary">HOG1</name>
    <name type="ORF">FGRRES_09612</name>
    <name type="ORF">FGSG_09612</name>
</gene>
<dbReference type="EC" id="2.7.11.24" evidence="2"/>
<dbReference type="EMBL" id="DS231668">
    <property type="protein sequence ID" value="ESU16220.1"/>
    <property type="molecule type" value="Genomic_DNA"/>
</dbReference>
<dbReference type="EMBL" id="HG970335">
    <property type="protein sequence ID" value="CEF84832.1"/>
    <property type="molecule type" value="Genomic_DNA"/>
</dbReference>
<dbReference type="RefSeq" id="XP_011328096.1">
    <property type="nucleotide sequence ID" value="XM_011329794.1"/>
</dbReference>
<dbReference type="SMR" id="P0C431"/>
<dbReference type="FunCoup" id="P0C431">
    <property type="interactions" value="602"/>
</dbReference>
<dbReference type="STRING" id="229533.P0C431"/>
<dbReference type="GeneID" id="23556558"/>
<dbReference type="KEGG" id="fgr:FGSG_09612"/>
<dbReference type="VEuPathDB" id="FungiDB:FGRAMPH1_01G26671"/>
<dbReference type="eggNOG" id="KOG0660">
    <property type="taxonomic scope" value="Eukaryota"/>
</dbReference>
<dbReference type="HOGENOM" id="CLU_000288_181_1_1"/>
<dbReference type="InParanoid" id="P0C431"/>
<dbReference type="OrthoDB" id="22804at110618"/>
<dbReference type="PHI-base" id="PHI:1005"/>
<dbReference type="PHI-base" id="PHI:2327"/>
<dbReference type="Proteomes" id="UP000070720">
    <property type="component" value="Chromosome 4"/>
</dbReference>
<dbReference type="GO" id="GO:0005737">
    <property type="term" value="C:cytoplasm"/>
    <property type="evidence" value="ECO:0007669"/>
    <property type="project" value="UniProtKB-SubCell"/>
</dbReference>
<dbReference type="GO" id="GO:0005634">
    <property type="term" value="C:nucleus"/>
    <property type="evidence" value="ECO:0007669"/>
    <property type="project" value="UniProtKB-SubCell"/>
</dbReference>
<dbReference type="GO" id="GO:0005524">
    <property type="term" value="F:ATP binding"/>
    <property type="evidence" value="ECO:0007669"/>
    <property type="project" value="UniProtKB-KW"/>
</dbReference>
<dbReference type="GO" id="GO:0004707">
    <property type="term" value="F:MAP kinase activity"/>
    <property type="evidence" value="ECO:0007669"/>
    <property type="project" value="UniProtKB-EC"/>
</dbReference>
<dbReference type="GO" id="GO:0106310">
    <property type="term" value="F:protein serine kinase activity"/>
    <property type="evidence" value="ECO:0007669"/>
    <property type="project" value="RHEA"/>
</dbReference>
<dbReference type="GO" id="GO:0051403">
    <property type="term" value="P:stress-activated MAPK cascade"/>
    <property type="evidence" value="ECO:0007669"/>
    <property type="project" value="InterPro"/>
</dbReference>
<dbReference type="CDD" id="cd07856">
    <property type="entry name" value="STKc_Sty1_Hog1"/>
    <property type="match status" value="1"/>
</dbReference>
<dbReference type="FunFam" id="1.10.510.10:FF:000049">
    <property type="entry name" value="Mitogen-activated protein kinase"/>
    <property type="match status" value="1"/>
</dbReference>
<dbReference type="FunFam" id="3.30.200.20:FF:000050">
    <property type="entry name" value="Mitogen-activated protein kinase"/>
    <property type="match status" value="1"/>
</dbReference>
<dbReference type="Gene3D" id="3.30.200.20">
    <property type="entry name" value="Phosphorylase Kinase, domain 1"/>
    <property type="match status" value="1"/>
</dbReference>
<dbReference type="Gene3D" id="1.10.510.10">
    <property type="entry name" value="Transferase(Phosphotransferase) domain 1"/>
    <property type="match status" value="1"/>
</dbReference>
<dbReference type="InterPro" id="IPR011009">
    <property type="entry name" value="Kinase-like_dom_sf"/>
</dbReference>
<dbReference type="InterPro" id="IPR050117">
    <property type="entry name" value="MAP_kinase"/>
</dbReference>
<dbReference type="InterPro" id="IPR003527">
    <property type="entry name" value="MAP_kinase_CS"/>
</dbReference>
<dbReference type="InterPro" id="IPR008352">
    <property type="entry name" value="MAPK_p38-like"/>
</dbReference>
<dbReference type="InterPro" id="IPR038783">
    <property type="entry name" value="MAPK_Sty1/Hog1"/>
</dbReference>
<dbReference type="InterPro" id="IPR000719">
    <property type="entry name" value="Prot_kinase_dom"/>
</dbReference>
<dbReference type="InterPro" id="IPR017441">
    <property type="entry name" value="Protein_kinase_ATP_BS"/>
</dbReference>
<dbReference type="InterPro" id="IPR008271">
    <property type="entry name" value="Ser/Thr_kinase_AS"/>
</dbReference>
<dbReference type="PANTHER" id="PTHR24055">
    <property type="entry name" value="MITOGEN-ACTIVATED PROTEIN KINASE"/>
    <property type="match status" value="1"/>
</dbReference>
<dbReference type="Pfam" id="PF00069">
    <property type="entry name" value="Pkinase"/>
    <property type="match status" value="1"/>
</dbReference>
<dbReference type="PRINTS" id="PR01773">
    <property type="entry name" value="P38MAPKINASE"/>
</dbReference>
<dbReference type="SMART" id="SM00220">
    <property type="entry name" value="S_TKc"/>
    <property type="match status" value="1"/>
</dbReference>
<dbReference type="SUPFAM" id="SSF56112">
    <property type="entry name" value="Protein kinase-like (PK-like)"/>
    <property type="match status" value="1"/>
</dbReference>
<dbReference type="PROSITE" id="PS01351">
    <property type="entry name" value="MAPK"/>
    <property type="match status" value="1"/>
</dbReference>
<dbReference type="PROSITE" id="PS00107">
    <property type="entry name" value="PROTEIN_KINASE_ATP"/>
    <property type="match status" value="1"/>
</dbReference>
<dbReference type="PROSITE" id="PS50011">
    <property type="entry name" value="PROTEIN_KINASE_DOM"/>
    <property type="match status" value="1"/>
</dbReference>
<dbReference type="PROSITE" id="PS00108">
    <property type="entry name" value="PROTEIN_KINASE_ST"/>
    <property type="match status" value="1"/>
</dbReference>
<feature type="chain" id="PRO_0000289691" description="Mitogen-activated protein kinase HOG1">
    <location>
        <begin position="1"/>
        <end position="357"/>
    </location>
</feature>
<feature type="domain" description="Protein kinase" evidence="5">
    <location>
        <begin position="20"/>
        <end position="299"/>
    </location>
</feature>
<feature type="short sequence motif" description="TXY">
    <location>
        <begin position="171"/>
        <end position="173"/>
    </location>
</feature>
<feature type="active site" description="Proton acceptor" evidence="5 6">
    <location>
        <position position="141"/>
    </location>
</feature>
<feature type="binding site" evidence="5">
    <location>
        <begin position="26"/>
        <end position="34"/>
    </location>
    <ligand>
        <name>ATP</name>
        <dbReference type="ChEBI" id="CHEBI:30616"/>
    </ligand>
</feature>
<feature type="binding site" evidence="5">
    <location>
        <position position="49"/>
    </location>
    <ligand>
        <name>ATP</name>
        <dbReference type="ChEBI" id="CHEBI:30616"/>
    </ligand>
</feature>
<feature type="modified residue" description="Phosphothreonine" evidence="1">
    <location>
        <position position="171"/>
    </location>
</feature>
<feature type="modified residue" description="Phosphotyrosine" evidence="1">
    <location>
        <position position="173"/>
    </location>
</feature>
<organism>
    <name type="scientific">Gibberella zeae (strain ATCC MYA-4620 / CBS 123657 / FGSC 9075 / NRRL 31084 / PH-1)</name>
    <name type="common">Wheat head blight fungus</name>
    <name type="synonym">Fusarium graminearum</name>
    <dbReference type="NCBI Taxonomy" id="229533"/>
    <lineage>
        <taxon>Eukaryota</taxon>
        <taxon>Fungi</taxon>
        <taxon>Dikarya</taxon>
        <taxon>Ascomycota</taxon>
        <taxon>Pezizomycotina</taxon>
        <taxon>Sordariomycetes</taxon>
        <taxon>Hypocreomycetidae</taxon>
        <taxon>Hypocreales</taxon>
        <taxon>Nectriaceae</taxon>
        <taxon>Fusarium</taxon>
    </lineage>
</organism>
<keyword id="KW-0010">Activator</keyword>
<keyword id="KW-0067">ATP-binding</keyword>
<keyword id="KW-0963">Cytoplasm</keyword>
<keyword id="KW-0418">Kinase</keyword>
<keyword id="KW-0547">Nucleotide-binding</keyword>
<keyword id="KW-0539">Nucleus</keyword>
<keyword id="KW-0597">Phosphoprotein</keyword>
<keyword id="KW-1185">Reference proteome</keyword>
<keyword id="KW-0723">Serine/threonine-protein kinase</keyword>
<keyword id="KW-0804">Transcription</keyword>
<keyword id="KW-0805">Transcription regulation</keyword>
<keyword id="KW-0808">Transferase</keyword>
<sequence length="357" mass="41131">MAEFVRAQIFGTTFEITSRYSDLQPVGMGAFGLVCSARDQLTNQNVAVKKIMKPFSTPVLAKRTYRELKLLKHLKHENVISLSDIFISPLEDIYFVTELLGTDLHRLLTSRPLEKQFIQYFLYQIMRGLKYVHSAGVVHRDLKPSNILVNENCDLKICDFGLARIQDPQMTGYVSTRYYRAPEIMLTWQKYDVEVDIWSAGCIFAEMLEGKPLFPGKDHVNQFSIITELLGTPPDDVINTIASENTLRFVKSLPKRERQPLRNKFKNADDSAIDLLERMLVFDPKKRITATEALAHDYLSPYHDPTDEPVAEEKFDWSFNDADLPVDTWKIMMYSEILDYHNVEAGVTNMEEQFNGQ</sequence>
<comment type="function">
    <text evidence="4">Proline-directed serine/threonine-protein kinase involved in a signal transduction pathway that is activated by changes in the osmolarity of the extracellular environment. Controls osmotic regulation of transcription of target genes.</text>
</comment>
<comment type="catalytic activity">
    <reaction evidence="2">
        <text>L-seryl-[protein] + ATP = O-phospho-L-seryl-[protein] + ADP + H(+)</text>
        <dbReference type="Rhea" id="RHEA:17989"/>
        <dbReference type="Rhea" id="RHEA-COMP:9863"/>
        <dbReference type="Rhea" id="RHEA-COMP:11604"/>
        <dbReference type="ChEBI" id="CHEBI:15378"/>
        <dbReference type="ChEBI" id="CHEBI:29999"/>
        <dbReference type="ChEBI" id="CHEBI:30616"/>
        <dbReference type="ChEBI" id="CHEBI:83421"/>
        <dbReference type="ChEBI" id="CHEBI:456216"/>
        <dbReference type="EC" id="2.7.11.24"/>
    </reaction>
    <physiologicalReaction direction="left-to-right" evidence="2">
        <dbReference type="Rhea" id="RHEA:17990"/>
    </physiologicalReaction>
</comment>
<comment type="catalytic activity">
    <reaction evidence="2">
        <text>L-threonyl-[protein] + ATP = O-phospho-L-threonyl-[protein] + ADP + H(+)</text>
        <dbReference type="Rhea" id="RHEA:46608"/>
        <dbReference type="Rhea" id="RHEA-COMP:11060"/>
        <dbReference type="Rhea" id="RHEA-COMP:11605"/>
        <dbReference type="ChEBI" id="CHEBI:15378"/>
        <dbReference type="ChEBI" id="CHEBI:30013"/>
        <dbReference type="ChEBI" id="CHEBI:30616"/>
        <dbReference type="ChEBI" id="CHEBI:61977"/>
        <dbReference type="ChEBI" id="CHEBI:456216"/>
        <dbReference type="EC" id="2.7.11.24"/>
    </reaction>
    <physiologicalReaction direction="left-to-right" evidence="2">
        <dbReference type="Rhea" id="RHEA:46609"/>
    </physiologicalReaction>
</comment>
<comment type="cofactor">
    <cofactor evidence="3">
        <name>Mg(2+)</name>
        <dbReference type="ChEBI" id="CHEBI:18420"/>
    </cofactor>
</comment>
<comment type="activity regulation">
    <text evidence="1">Activated by tyrosine and threonine phosphorylation.</text>
</comment>
<comment type="subcellular location">
    <subcellularLocation>
        <location evidence="1">Cytoplasm</location>
    </subcellularLocation>
    <subcellularLocation>
        <location evidence="1">Nucleus</location>
    </subcellularLocation>
</comment>
<comment type="domain">
    <text>The TXY motif contains the threonine and tyrosine residues whose phosphorylation activates the MAP kinases.</text>
</comment>
<comment type="PTM">
    <text evidence="1">Dually phosphorylated on Thr-171 and Tyr-173, which activates the enzyme.</text>
</comment>
<comment type="similarity">
    <text evidence="5">Belongs to the protein kinase superfamily. Ser/Thr protein kinase family. MAP kinase subfamily. HOG1 sub-subfamily.</text>
</comment>
<name>HOG1_GIBZE</name>
<protein>
    <recommendedName>
        <fullName>Mitogen-activated protein kinase HOG1</fullName>
        <shortName>MAP kinase HOG1</shortName>
        <ecNumber evidence="2">2.7.11.24</ecNumber>
    </recommendedName>
</protein>
<evidence type="ECO:0000250" key="1"/>
<evidence type="ECO:0000250" key="2">
    <source>
        <dbReference type="UniProtKB" id="P32485"/>
    </source>
</evidence>
<evidence type="ECO:0000250" key="3">
    <source>
        <dbReference type="UniProtKB" id="Q16539"/>
    </source>
</evidence>
<evidence type="ECO:0000250" key="4">
    <source>
        <dbReference type="UniProtKB" id="Q4WSF6"/>
    </source>
</evidence>
<evidence type="ECO:0000255" key="5">
    <source>
        <dbReference type="PROSITE-ProRule" id="PRU00159"/>
    </source>
</evidence>
<evidence type="ECO:0000255" key="6">
    <source>
        <dbReference type="PROSITE-ProRule" id="PRU10027"/>
    </source>
</evidence>
<accession>P0C431</accession>
<accession>A0A0E0SEG9</accession>
<accession>V6RW82</accession>